<evidence type="ECO:0000255" key="1">
    <source>
        <dbReference type="HAMAP-Rule" id="MF_00379"/>
    </source>
</evidence>
<organism>
    <name type="scientific">Ehrlichia ruminantium (strain Gardel)</name>
    <dbReference type="NCBI Taxonomy" id="302409"/>
    <lineage>
        <taxon>Bacteria</taxon>
        <taxon>Pseudomonadati</taxon>
        <taxon>Pseudomonadota</taxon>
        <taxon>Alphaproteobacteria</taxon>
        <taxon>Rickettsiales</taxon>
        <taxon>Anaplasmataceae</taxon>
        <taxon>Ehrlichia</taxon>
    </lineage>
</organism>
<comment type="function">
    <text evidence="1">Exhibits a very high intrinsic GTPase hydrolysis rate. Involved in the addition of a carboxymethylaminomethyl (cmnm) group at the wobble position (U34) of certain tRNAs, forming tRNA-cmnm(5)s(2)U34.</text>
</comment>
<comment type="cofactor">
    <cofactor evidence="1">
        <name>K(+)</name>
        <dbReference type="ChEBI" id="CHEBI:29103"/>
    </cofactor>
    <text evidence="1">Binds 1 potassium ion per subunit.</text>
</comment>
<comment type="subunit">
    <text evidence="1">Homodimer. Heterotetramer of two MnmE and two MnmG subunits.</text>
</comment>
<comment type="subcellular location">
    <subcellularLocation>
        <location evidence="1">Cytoplasm</location>
    </subcellularLocation>
</comment>
<comment type="similarity">
    <text evidence="1">Belongs to the TRAFAC class TrmE-Era-EngA-EngB-Septin-like GTPase superfamily. TrmE GTPase family.</text>
</comment>
<name>MNME_EHRRG</name>
<reference key="1">
    <citation type="journal article" date="2006" name="J. Bacteriol.">
        <title>Comparative genomic analysis of three strains of Ehrlichia ruminantium reveals an active process of genome size plasticity.</title>
        <authorList>
            <person name="Frutos R."/>
            <person name="Viari A."/>
            <person name="Ferraz C."/>
            <person name="Morgat A."/>
            <person name="Eychenie S."/>
            <person name="Kandassamy Y."/>
            <person name="Chantal I."/>
            <person name="Bensaid A."/>
            <person name="Coissac E."/>
            <person name="Vachiery N."/>
            <person name="Demaille J."/>
            <person name="Martinez D."/>
        </authorList>
    </citation>
    <scope>NUCLEOTIDE SEQUENCE [LARGE SCALE GENOMIC DNA]</scope>
    <source>
        <strain>Gardel</strain>
    </source>
</reference>
<gene>
    <name evidence="1" type="primary">mnmE</name>
    <name evidence="1" type="synonym">trmE</name>
    <name type="ordered locus">ERGA_CDS_00280</name>
</gene>
<proteinExistence type="inferred from homology"/>
<feature type="chain" id="PRO_0000345779" description="tRNA modification GTPase MnmE">
    <location>
        <begin position="1"/>
        <end position="439"/>
    </location>
</feature>
<feature type="domain" description="TrmE-type G">
    <location>
        <begin position="211"/>
        <end position="364"/>
    </location>
</feature>
<feature type="binding site" evidence="1">
    <location>
        <position position="20"/>
    </location>
    <ligand>
        <name>(6S)-5-formyl-5,6,7,8-tetrahydrofolate</name>
        <dbReference type="ChEBI" id="CHEBI:57457"/>
    </ligand>
</feature>
<feature type="binding site" evidence="1">
    <location>
        <position position="78"/>
    </location>
    <ligand>
        <name>(6S)-5-formyl-5,6,7,8-tetrahydrofolate</name>
        <dbReference type="ChEBI" id="CHEBI:57457"/>
    </ligand>
</feature>
<feature type="binding site" evidence="1">
    <location>
        <position position="116"/>
    </location>
    <ligand>
        <name>(6S)-5-formyl-5,6,7,8-tetrahydrofolate</name>
        <dbReference type="ChEBI" id="CHEBI:57457"/>
    </ligand>
</feature>
<feature type="binding site" evidence="1">
    <location>
        <begin position="221"/>
        <end position="226"/>
    </location>
    <ligand>
        <name>GTP</name>
        <dbReference type="ChEBI" id="CHEBI:37565"/>
    </ligand>
</feature>
<feature type="binding site" evidence="1">
    <location>
        <position position="225"/>
    </location>
    <ligand>
        <name>Mg(2+)</name>
        <dbReference type="ChEBI" id="CHEBI:18420"/>
    </ligand>
</feature>
<feature type="binding site" evidence="1">
    <location>
        <begin position="240"/>
        <end position="246"/>
    </location>
    <ligand>
        <name>GTP</name>
        <dbReference type="ChEBI" id="CHEBI:37565"/>
    </ligand>
</feature>
<feature type="binding site" evidence="1">
    <location>
        <position position="246"/>
    </location>
    <ligand>
        <name>Mg(2+)</name>
        <dbReference type="ChEBI" id="CHEBI:18420"/>
    </ligand>
</feature>
<feature type="binding site" evidence="1">
    <location>
        <begin position="265"/>
        <end position="268"/>
    </location>
    <ligand>
        <name>GTP</name>
        <dbReference type="ChEBI" id="CHEBI:37565"/>
    </ligand>
</feature>
<feature type="binding site" evidence="1">
    <location>
        <position position="439"/>
    </location>
    <ligand>
        <name>(6S)-5-formyl-5,6,7,8-tetrahydrofolate</name>
        <dbReference type="ChEBI" id="CHEBI:57457"/>
    </ligand>
</feature>
<protein>
    <recommendedName>
        <fullName evidence="1">tRNA modification GTPase MnmE</fullName>
        <ecNumber evidence="1">3.6.-.-</ecNumber>
    </recommendedName>
</protein>
<accession>Q5FF19</accession>
<keyword id="KW-0963">Cytoplasm</keyword>
<keyword id="KW-0342">GTP-binding</keyword>
<keyword id="KW-0378">Hydrolase</keyword>
<keyword id="KW-0460">Magnesium</keyword>
<keyword id="KW-0479">Metal-binding</keyword>
<keyword id="KW-0547">Nucleotide-binding</keyword>
<keyword id="KW-0630">Potassium</keyword>
<keyword id="KW-0819">tRNA processing</keyword>
<dbReference type="EC" id="3.6.-.-" evidence="1"/>
<dbReference type="EMBL" id="CR925677">
    <property type="protein sequence ID" value="CAI27480.1"/>
    <property type="molecule type" value="Genomic_DNA"/>
</dbReference>
<dbReference type="RefSeq" id="WP_011255238.1">
    <property type="nucleotide sequence ID" value="NC_006831.1"/>
</dbReference>
<dbReference type="SMR" id="Q5FF19"/>
<dbReference type="KEGG" id="erg:ERGA_CDS_00280"/>
<dbReference type="HOGENOM" id="CLU_019624_3_1_5"/>
<dbReference type="OrthoDB" id="9805918at2"/>
<dbReference type="Proteomes" id="UP000000533">
    <property type="component" value="Chromosome"/>
</dbReference>
<dbReference type="GO" id="GO:0005737">
    <property type="term" value="C:cytoplasm"/>
    <property type="evidence" value="ECO:0007669"/>
    <property type="project" value="UniProtKB-SubCell"/>
</dbReference>
<dbReference type="GO" id="GO:0005525">
    <property type="term" value="F:GTP binding"/>
    <property type="evidence" value="ECO:0007669"/>
    <property type="project" value="UniProtKB-UniRule"/>
</dbReference>
<dbReference type="GO" id="GO:0003924">
    <property type="term" value="F:GTPase activity"/>
    <property type="evidence" value="ECO:0007669"/>
    <property type="project" value="UniProtKB-UniRule"/>
</dbReference>
<dbReference type="GO" id="GO:0046872">
    <property type="term" value="F:metal ion binding"/>
    <property type="evidence" value="ECO:0007669"/>
    <property type="project" value="UniProtKB-KW"/>
</dbReference>
<dbReference type="GO" id="GO:0030488">
    <property type="term" value="P:tRNA methylation"/>
    <property type="evidence" value="ECO:0007669"/>
    <property type="project" value="TreeGrafter"/>
</dbReference>
<dbReference type="GO" id="GO:0002098">
    <property type="term" value="P:tRNA wobble uridine modification"/>
    <property type="evidence" value="ECO:0007669"/>
    <property type="project" value="TreeGrafter"/>
</dbReference>
<dbReference type="CDD" id="cd04164">
    <property type="entry name" value="trmE"/>
    <property type="match status" value="1"/>
</dbReference>
<dbReference type="CDD" id="cd14858">
    <property type="entry name" value="TrmE_N"/>
    <property type="match status" value="1"/>
</dbReference>
<dbReference type="Gene3D" id="3.40.50.300">
    <property type="entry name" value="P-loop containing nucleotide triphosphate hydrolases"/>
    <property type="match status" value="1"/>
</dbReference>
<dbReference type="Gene3D" id="3.30.1360.120">
    <property type="entry name" value="Probable tRNA modification gtpase trme, domain 1"/>
    <property type="match status" value="1"/>
</dbReference>
<dbReference type="Gene3D" id="1.20.120.430">
    <property type="entry name" value="tRNA modification GTPase MnmE domain 2"/>
    <property type="match status" value="1"/>
</dbReference>
<dbReference type="HAMAP" id="MF_00379">
    <property type="entry name" value="GTPase_MnmE"/>
    <property type="match status" value="1"/>
</dbReference>
<dbReference type="InterPro" id="IPR031168">
    <property type="entry name" value="G_TrmE"/>
</dbReference>
<dbReference type="InterPro" id="IPR006073">
    <property type="entry name" value="GTP-bd"/>
</dbReference>
<dbReference type="InterPro" id="IPR018948">
    <property type="entry name" value="GTP-bd_TrmE_N"/>
</dbReference>
<dbReference type="InterPro" id="IPR004520">
    <property type="entry name" value="GTPase_MnmE"/>
</dbReference>
<dbReference type="InterPro" id="IPR027368">
    <property type="entry name" value="MnmE_dom2"/>
</dbReference>
<dbReference type="InterPro" id="IPR025867">
    <property type="entry name" value="MnmE_helical"/>
</dbReference>
<dbReference type="InterPro" id="IPR027417">
    <property type="entry name" value="P-loop_NTPase"/>
</dbReference>
<dbReference type="InterPro" id="IPR005225">
    <property type="entry name" value="Small_GTP-bd"/>
</dbReference>
<dbReference type="InterPro" id="IPR027266">
    <property type="entry name" value="TrmE/GcvT_dom1"/>
</dbReference>
<dbReference type="NCBIfam" id="TIGR00450">
    <property type="entry name" value="mnmE_trmE_thdF"/>
    <property type="match status" value="1"/>
</dbReference>
<dbReference type="NCBIfam" id="NF003661">
    <property type="entry name" value="PRK05291.1-3"/>
    <property type="match status" value="1"/>
</dbReference>
<dbReference type="NCBIfam" id="TIGR00231">
    <property type="entry name" value="small_GTP"/>
    <property type="match status" value="1"/>
</dbReference>
<dbReference type="PANTHER" id="PTHR42714">
    <property type="entry name" value="TRNA MODIFICATION GTPASE GTPBP3"/>
    <property type="match status" value="1"/>
</dbReference>
<dbReference type="PANTHER" id="PTHR42714:SF2">
    <property type="entry name" value="TRNA MODIFICATION GTPASE GTPBP3, MITOCHONDRIAL"/>
    <property type="match status" value="1"/>
</dbReference>
<dbReference type="Pfam" id="PF01926">
    <property type="entry name" value="MMR_HSR1"/>
    <property type="match status" value="1"/>
</dbReference>
<dbReference type="Pfam" id="PF12631">
    <property type="entry name" value="MnmE_helical"/>
    <property type="match status" value="1"/>
</dbReference>
<dbReference type="Pfam" id="PF10396">
    <property type="entry name" value="TrmE_N"/>
    <property type="match status" value="1"/>
</dbReference>
<dbReference type="SUPFAM" id="SSF52540">
    <property type="entry name" value="P-loop containing nucleoside triphosphate hydrolases"/>
    <property type="match status" value="1"/>
</dbReference>
<dbReference type="SUPFAM" id="SSF116878">
    <property type="entry name" value="TrmE connector domain"/>
    <property type="match status" value="1"/>
</dbReference>
<dbReference type="PROSITE" id="PS51709">
    <property type="entry name" value="G_TRME"/>
    <property type="match status" value="1"/>
</dbReference>
<sequence>MSTIFALCTPWGKSGVAVIRVSGQDAVKTFMHFKISNAIKPRVATFTPLYNAAHEVIDEVIVVYFSAPNSFTGEDVVELHTHGSIAVIRMILCELGKIFIPAGPGEFSLRAFLNNKVDLTRAEAIVDLINAETEMQAKQAIRQMSGSLEKLYQSWRQQLIDVLSNMEAYIDFPEEVTSFAVENISFLLDKIKESLENHLNDGRKGEILRQGIYVAILGEPNSGKSTLFNHLAKRDIAIVSEYAGTTRDVLETHIDIAGYPIVIIDTAGIRDSNDPVEQEGIRRAKLKAESADFKIIMLPYEKKDALNNEIIDLIDDRSICVLSKSDSIITQNLININDINFIPVSVCCNLGIEHLLSAIQKKVEADFKFCSTSPFITSDRQRVHIQNAVNILKNISFELPMELISEDLRLSVRELEKVVGVISNEEILDNVFGKFCIGK</sequence>